<protein>
    <recommendedName>
        <fullName evidence="1">Mitochondrial distribution and morphology protein 34-2</fullName>
    </recommendedName>
</protein>
<dbReference type="EMBL" id="AM920437">
    <property type="protein sequence ID" value="CAP98496.1"/>
    <property type="status" value="ALT_INIT"/>
    <property type="molecule type" value="Genomic_DNA"/>
</dbReference>
<dbReference type="RefSeq" id="XP_002565154.1">
    <property type="nucleotide sequence ID" value="XM_002565108.1"/>
</dbReference>
<dbReference type="SMR" id="B6HR25"/>
<dbReference type="STRING" id="500485.B6HR25"/>
<dbReference type="GeneID" id="8309543"/>
<dbReference type="KEGG" id="pcs:N7525_005126"/>
<dbReference type="eggNOG" id="ENOG502QT3W">
    <property type="taxonomic scope" value="Eukaryota"/>
</dbReference>
<dbReference type="HOGENOM" id="CLU_036502_1_0_1"/>
<dbReference type="OrthoDB" id="17927at2759"/>
<dbReference type="BioCyc" id="PCHR:PC22G12080-MONOMER"/>
<dbReference type="Proteomes" id="UP000000724">
    <property type="component" value="Contig Pc00c22"/>
</dbReference>
<dbReference type="GO" id="GO:0032865">
    <property type="term" value="C:ERMES complex"/>
    <property type="evidence" value="ECO:0007669"/>
    <property type="project" value="UniProtKB-UniRule"/>
</dbReference>
<dbReference type="GO" id="GO:0008289">
    <property type="term" value="F:lipid binding"/>
    <property type="evidence" value="ECO:0007669"/>
    <property type="project" value="UniProtKB-KW"/>
</dbReference>
<dbReference type="GO" id="GO:0000002">
    <property type="term" value="P:mitochondrial genome maintenance"/>
    <property type="evidence" value="ECO:0007669"/>
    <property type="project" value="UniProtKB-UniRule"/>
</dbReference>
<dbReference type="GO" id="GO:1990456">
    <property type="term" value="P:mitochondrion-endoplasmic reticulum membrane tethering"/>
    <property type="evidence" value="ECO:0007669"/>
    <property type="project" value="TreeGrafter"/>
</dbReference>
<dbReference type="GO" id="GO:0015914">
    <property type="term" value="P:phospholipid transport"/>
    <property type="evidence" value="ECO:0007669"/>
    <property type="project" value="TreeGrafter"/>
</dbReference>
<dbReference type="CDD" id="cd21673">
    <property type="entry name" value="SMP_Mdm34"/>
    <property type="match status" value="1"/>
</dbReference>
<dbReference type="HAMAP" id="MF_03105">
    <property type="entry name" value="Mdm34"/>
    <property type="match status" value="1"/>
</dbReference>
<dbReference type="InterPro" id="IPR027536">
    <property type="entry name" value="Mdm34"/>
</dbReference>
<dbReference type="InterPro" id="IPR031468">
    <property type="entry name" value="SMP_LBD"/>
</dbReference>
<dbReference type="PANTHER" id="PTHR28185">
    <property type="entry name" value="MITOCHONDRIAL DISTRIBUTION AND MORPHOLOGY PROTEIN 34"/>
    <property type="match status" value="1"/>
</dbReference>
<dbReference type="PANTHER" id="PTHR28185:SF1">
    <property type="entry name" value="MITOCHONDRIAL DISTRIBUTION AND MORPHOLOGY PROTEIN 34"/>
    <property type="match status" value="1"/>
</dbReference>
<dbReference type="PROSITE" id="PS51847">
    <property type="entry name" value="SMP"/>
    <property type="match status" value="1"/>
</dbReference>
<accession>B6HR25</accession>
<reference key="1">
    <citation type="journal article" date="2008" name="Nat. Biotechnol.">
        <title>Genome sequencing and analysis of the filamentous fungus Penicillium chrysogenum.</title>
        <authorList>
            <person name="van den Berg M.A."/>
            <person name="Albang R."/>
            <person name="Albermann K."/>
            <person name="Badger J.H."/>
            <person name="Daran J.-M."/>
            <person name="Driessen A.J.M."/>
            <person name="Garcia-Estrada C."/>
            <person name="Fedorova N.D."/>
            <person name="Harris D.M."/>
            <person name="Heijne W.H.M."/>
            <person name="Joardar V.S."/>
            <person name="Kiel J.A.K.W."/>
            <person name="Kovalchuk A."/>
            <person name="Martin J.F."/>
            <person name="Nierman W.C."/>
            <person name="Nijland J.G."/>
            <person name="Pronk J.T."/>
            <person name="Roubos J.A."/>
            <person name="van der Klei I.J."/>
            <person name="van Peij N.N.M.E."/>
            <person name="Veenhuis M."/>
            <person name="von Doehren H."/>
            <person name="Wagner C."/>
            <person name="Wortman J.R."/>
            <person name="Bovenberg R.A.L."/>
        </authorList>
    </citation>
    <scope>NUCLEOTIDE SEQUENCE [LARGE SCALE GENOMIC DNA]</scope>
    <source>
        <strain>ATCC 28089 / DSM 1075 / NRRL 1951 / Wisconsin 54-1255</strain>
    </source>
</reference>
<name>MD342_PENRW</name>
<keyword id="KW-0445">Lipid transport</keyword>
<keyword id="KW-0446">Lipid-binding</keyword>
<keyword id="KW-0472">Membrane</keyword>
<keyword id="KW-0496">Mitochondrion</keyword>
<keyword id="KW-1000">Mitochondrion outer membrane</keyword>
<keyword id="KW-1185">Reference proteome</keyword>
<keyword id="KW-0812">Transmembrane</keyword>
<keyword id="KW-1134">Transmembrane beta strand</keyword>
<keyword id="KW-0813">Transport</keyword>
<feature type="chain" id="PRO_0000384355" description="Mitochondrial distribution and morphology protein 34-2">
    <location>
        <begin position="1"/>
        <end position="556"/>
    </location>
</feature>
<feature type="domain" description="SMP-LTD" evidence="1">
    <location>
        <begin position="1"/>
        <end position="195"/>
    </location>
</feature>
<feature type="region of interest" description="Disordered" evidence="2">
    <location>
        <begin position="206"/>
        <end position="239"/>
    </location>
</feature>
<feature type="region of interest" description="Disordered" evidence="2">
    <location>
        <begin position="299"/>
        <end position="423"/>
    </location>
</feature>
<feature type="region of interest" description="Disordered" evidence="2">
    <location>
        <begin position="440"/>
        <end position="473"/>
    </location>
</feature>
<feature type="compositionally biased region" description="Polar residues" evidence="2">
    <location>
        <begin position="299"/>
        <end position="333"/>
    </location>
</feature>
<feature type="compositionally biased region" description="Low complexity" evidence="2">
    <location>
        <begin position="334"/>
        <end position="357"/>
    </location>
</feature>
<feature type="compositionally biased region" description="Basic residues" evidence="2">
    <location>
        <begin position="362"/>
        <end position="374"/>
    </location>
</feature>
<feature type="compositionally biased region" description="Basic and acidic residues" evidence="2">
    <location>
        <begin position="375"/>
        <end position="385"/>
    </location>
</feature>
<feature type="compositionally biased region" description="Polar residues" evidence="2">
    <location>
        <begin position="391"/>
        <end position="402"/>
    </location>
</feature>
<feature type="compositionally biased region" description="Basic and acidic residues" evidence="2">
    <location>
        <begin position="459"/>
        <end position="468"/>
    </location>
</feature>
<sequence>MAFNFNWSPLMADASFYTRAQDLLTAALNKSPKPPIIVDDIHVTELNLGSIPPELEILEIGDLAEDRFRGIFKMSYTGDAFLTLKTRVQANPLNTFLLTRPTFGSPVPLAAATPLTIPLQITLSDFKLSGFVILVFSKQKGITVVFRNDPLESLKVSSTFDSIPFVRDFLQKEIEAQLRILFMDELPAIIHRLSLRLWVPEYRTGEEMNDETDNTAKSSEGPGQDPLASPPQDPVDSLGNALNESEIASLSLDSSVETHSLFSQKNLLRLAALTDSQRTLSLFTPSIQEVVYRAWTSPTDTSEFPSSVISPLSPTLSREQSQMGSMSSLHETASNASMQSRPSMSSHSFSTSTYGLSLGAGRHSKAHARKRKKRVVDLRRPKTTDDAMSVSDESVMTESSRPPSIASAPLPIVNEPSDDPVTPPLSPEVDCHLPIIPERHLPSFSRPTRRDADLSYSHETIRGPKAEDVDATPRATMRGYPQERAEAGPSSNQRTPLPAAVLPFSKDENANVDPVLVDRLAGEIARRMREDKLMTNACSGFWSRQHEDSPPPAYGH</sequence>
<proteinExistence type="inferred from homology"/>
<organism>
    <name type="scientific">Penicillium rubens (strain ATCC 28089 / DSM 1075 / NRRL 1951 / Wisconsin 54-1255)</name>
    <name type="common">Penicillium chrysogenum</name>
    <dbReference type="NCBI Taxonomy" id="500485"/>
    <lineage>
        <taxon>Eukaryota</taxon>
        <taxon>Fungi</taxon>
        <taxon>Dikarya</taxon>
        <taxon>Ascomycota</taxon>
        <taxon>Pezizomycotina</taxon>
        <taxon>Eurotiomycetes</taxon>
        <taxon>Eurotiomycetidae</taxon>
        <taxon>Eurotiales</taxon>
        <taxon>Aspergillaceae</taxon>
        <taxon>Penicillium</taxon>
        <taxon>Penicillium chrysogenum species complex</taxon>
    </lineage>
</organism>
<evidence type="ECO:0000255" key="1">
    <source>
        <dbReference type="HAMAP-Rule" id="MF_03105"/>
    </source>
</evidence>
<evidence type="ECO:0000256" key="2">
    <source>
        <dbReference type="SAM" id="MobiDB-lite"/>
    </source>
</evidence>
<evidence type="ECO:0000305" key="3"/>
<comment type="function">
    <text evidence="1">Component of the ERMES/MDM complex, which serves as a molecular tether to connect the endoplasmic reticulum (ER) and mitochondria. Components of this complex are involved in the control of mitochondrial shape and protein biogenesis, and function in nonvesicular lipid trafficking between the ER and mitochondria. Mdm34 is required for the interaction of the ER-resident membrane protein mmm1 and the outer mitochondrial membrane-resident beta-barrel protein mdm10.</text>
</comment>
<comment type="subunit">
    <text evidence="1">Component of the ER-mitochondria encounter structure (ERMES) or MDM complex, composed of mmm1, mdm10, mdm12 and mdm34.</text>
</comment>
<comment type="subcellular location">
    <subcellularLocation>
        <location evidence="1">Mitochondrion outer membrane</location>
        <topology evidence="1">Multi-pass membrane protein</topology>
    </subcellularLocation>
    <text evidence="1">The ERMES/MDM complex localizes to a few discrete foci (around 10 per single cell), that represent mitochondria-endoplasmic reticulum junctions. These foci are often found next to mtDNA nucleoids.</text>
</comment>
<comment type="domain">
    <text evidence="1">Lacks alpha-helical transmembrane segments, suggesting that it resides in the membrane via beta-sheet conformations similar to those predicted for other outer membrane proteins and porin.</text>
</comment>
<comment type="domain">
    <text evidence="1">The SMP-LTD domain is a barrel-like domain that can bind various types of glycerophospholipids in its interior and mediate their transfer between two adjacent bilayers.</text>
</comment>
<comment type="similarity">
    <text evidence="1">Belongs to the MDM34 family.</text>
</comment>
<comment type="sequence caution" evidence="3">
    <conflict type="erroneous initiation">
        <sequence resource="EMBL-CDS" id="CAP98496"/>
    </conflict>
</comment>
<gene>
    <name evidence="1" type="primary">mdm34-2</name>
    <name type="ORF">Pc22g12080</name>
</gene>